<proteinExistence type="inferred from homology"/>
<name>NOP10_THESM</name>
<keyword id="KW-1185">Reference proteome</keyword>
<keyword id="KW-0687">Ribonucleoprotein</keyword>
<keyword id="KW-0690">Ribosome biogenesis</keyword>
<keyword id="KW-0698">rRNA processing</keyword>
<dbReference type="EMBL" id="CP001463">
    <property type="protein sequence ID" value="ACS89641.1"/>
    <property type="molecule type" value="Genomic_DNA"/>
</dbReference>
<dbReference type="RefSeq" id="WP_015848861.1">
    <property type="nucleotide sequence ID" value="NC_012883.1"/>
</dbReference>
<dbReference type="SMR" id="C6A1Z6"/>
<dbReference type="STRING" id="604354.TSIB_0576"/>
<dbReference type="GeneID" id="8095564"/>
<dbReference type="KEGG" id="tsi:TSIB_0576"/>
<dbReference type="eggNOG" id="arCOG00906">
    <property type="taxonomic scope" value="Archaea"/>
</dbReference>
<dbReference type="HOGENOM" id="CLU_196480_1_0_2"/>
<dbReference type="OrthoDB" id="7259at2157"/>
<dbReference type="Proteomes" id="UP000009079">
    <property type="component" value="Chromosome"/>
</dbReference>
<dbReference type="GO" id="GO:1990904">
    <property type="term" value="C:ribonucleoprotein complex"/>
    <property type="evidence" value="ECO:0007669"/>
    <property type="project" value="UniProtKB-KW"/>
</dbReference>
<dbReference type="GO" id="GO:0030515">
    <property type="term" value="F:snoRNA binding"/>
    <property type="evidence" value="ECO:0007669"/>
    <property type="project" value="InterPro"/>
</dbReference>
<dbReference type="GO" id="GO:0001522">
    <property type="term" value="P:pseudouridine synthesis"/>
    <property type="evidence" value="ECO:0007669"/>
    <property type="project" value="InterPro"/>
</dbReference>
<dbReference type="GO" id="GO:0006364">
    <property type="term" value="P:rRNA processing"/>
    <property type="evidence" value="ECO:0007669"/>
    <property type="project" value="UniProtKB-UniRule"/>
</dbReference>
<dbReference type="Gene3D" id="2.20.28.40">
    <property type="entry name" value="H/ACA ribonucleoprotein complex, subunit Nop10"/>
    <property type="match status" value="1"/>
</dbReference>
<dbReference type="HAMAP" id="MF_00803">
    <property type="entry name" value="Nop10"/>
    <property type="match status" value="1"/>
</dbReference>
<dbReference type="InterPro" id="IPR007264">
    <property type="entry name" value="H/ACA_rnp_Nop10"/>
</dbReference>
<dbReference type="InterPro" id="IPR036756">
    <property type="entry name" value="H/ACA_rnp_Nop10_sf"/>
</dbReference>
<dbReference type="InterPro" id="IPR023532">
    <property type="entry name" value="Nop10_arc-typ"/>
</dbReference>
<dbReference type="NCBIfam" id="NF009623">
    <property type="entry name" value="PRK13130.1"/>
    <property type="match status" value="1"/>
</dbReference>
<dbReference type="PANTHER" id="PTHR13305:SF0">
    <property type="entry name" value="H_ACA RIBONUCLEOPROTEIN COMPLEX SUBUNIT 3"/>
    <property type="match status" value="1"/>
</dbReference>
<dbReference type="PANTHER" id="PTHR13305">
    <property type="entry name" value="RIBOSOME BIOGENESIS PROTEIN NOP10"/>
    <property type="match status" value="1"/>
</dbReference>
<dbReference type="Pfam" id="PF04135">
    <property type="entry name" value="Nop10p"/>
    <property type="match status" value="1"/>
</dbReference>
<dbReference type="SUPFAM" id="SSF144210">
    <property type="entry name" value="Nop10-like SnoRNP"/>
    <property type="match status" value="1"/>
</dbReference>
<accession>C6A1Z6</accession>
<organism>
    <name type="scientific">Thermococcus sibiricus (strain DSM 12597 / MM 739)</name>
    <dbReference type="NCBI Taxonomy" id="604354"/>
    <lineage>
        <taxon>Archaea</taxon>
        <taxon>Methanobacteriati</taxon>
        <taxon>Methanobacteriota</taxon>
        <taxon>Thermococci</taxon>
        <taxon>Thermococcales</taxon>
        <taxon>Thermococcaceae</taxon>
        <taxon>Thermococcus</taxon>
    </lineage>
</organism>
<sequence length="59" mass="6857">MRFKIKKCPKCGEYTLKETCPLCGEKTKLAHPPKFSPEDPYGEYRRRLKKETLGIGVKK</sequence>
<protein>
    <recommendedName>
        <fullName evidence="1">Ribosome biogenesis protein Nop10</fullName>
    </recommendedName>
</protein>
<feature type="chain" id="PRO_1000212998" description="Ribosome biogenesis protein Nop10">
    <location>
        <begin position="1"/>
        <end position="59"/>
    </location>
</feature>
<reference key="1">
    <citation type="journal article" date="2009" name="Appl. Environ. Microbiol.">
        <title>Metabolic versatility and indigenous origin of the archaeon Thermococcus sibiricus, isolated from a siberian oil reservoir, as revealed by genome analysis.</title>
        <authorList>
            <person name="Mardanov A.V."/>
            <person name="Ravin N.V."/>
            <person name="Svetlitchnyi V.A."/>
            <person name="Beletsky A.V."/>
            <person name="Miroshnichenko M.L."/>
            <person name="Bonch-Osmolovskaya E.A."/>
            <person name="Skryabin K.G."/>
        </authorList>
    </citation>
    <scope>NUCLEOTIDE SEQUENCE [LARGE SCALE GENOMIC DNA]</scope>
    <source>
        <strain>DSM 12597 / MM 739</strain>
    </source>
</reference>
<evidence type="ECO:0000255" key="1">
    <source>
        <dbReference type="HAMAP-Rule" id="MF_00803"/>
    </source>
</evidence>
<comment type="function">
    <text evidence="1">Involved in ribosome biogenesis; more specifically in 18S rRNA pseudouridylation and in cleavage of pre-rRNA.</text>
</comment>
<comment type="similarity">
    <text evidence="1">Belongs to the NOP10 family.</text>
</comment>
<gene>
    <name evidence="1" type="primary">nop10</name>
    <name type="ordered locus">TSIB_0576</name>
</gene>